<keyword id="KW-0378">Hydrolase</keyword>
<keyword id="KW-0659">Purine metabolism</keyword>
<feature type="chain" id="PRO_0000050615" description="5-hydroxyisourate hydrolase">
    <location>
        <begin position="1"/>
        <end position="124"/>
    </location>
</feature>
<feature type="binding site" evidence="1">
    <location>
        <position position="15"/>
    </location>
    <ligand>
        <name>substrate</name>
    </ligand>
</feature>
<feature type="binding site" evidence="1">
    <location>
        <position position="53"/>
    </location>
    <ligand>
        <name>substrate</name>
    </ligand>
</feature>
<feature type="binding site" evidence="1">
    <location>
        <position position="121"/>
    </location>
    <ligand>
        <name>substrate</name>
    </ligand>
</feature>
<sequence>MAETSKADGGRLTTHVLDTATGKPAAGLSIALYRLDGSARTHLKTVATNADGRCDAALLAGAEFRAGEYELVFAAGDYLRGQGTKLPEPAFLDSVPIRFGMAEAVHYHVPLLISPYGYSTYRGS</sequence>
<reference key="1">
    <citation type="journal article" date="2000" name="DNA Res.">
        <title>Complete genome structure of the nitrogen-fixing symbiotic bacterium Mesorhizobium loti.</title>
        <authorList>
            <person name="Kaneko T."/>
            <person name="Nakamura Y."/>
            <person name="Sato S."/>
            <person name="Asamizu E."/>
            <person name="Kato T."/>
            <person name="Sasamoto S."/>
            <person name="Watanabe A."/>
            <person name="Idesawa K."/>
            <person name="Ishikawa A."/>
            <person name="Kawashima K."/>
            <person name="Kimura T."/>
            <person name="Kishida Y."/>
            <person name="Kiyokawa C."/>
            <person name="Kohara M."/>
            <person name="Matsumoto M."/>
            <person name="Matsuno A."/>
            <person name="Mochizuki Y."/>
            <person name="Nakayama S."/>
            <person name="Nakazaki N."/>
            <person name="Shimpo S."/>
            <person name="Sugimoto M."/>
            <person name="Takeuchi C."/>
            <person name="Yamada M."/>
            <person name="Tabata S."/>
        </authorList>
    </citation>
    <scope>NUCLEOTIDE SEQUENCE [LARGE SCALE GENOMIC DNA]</scope>
    <source>
        <strain>LMG 29417 / CECT 9101 / MAFF 303099</strain>
    </source>
</reference>
<organism>
    <name type="scientific">Mesorhizobium japonicum (strain LMG 29417 / CECT 9101 / MAFF 303099)</name>
    <name type="common">Mesorhizobium loti (strain MAFF 303099)</name>
    <dbReference type="NCBI Taxonomy" id="266835"/>
    <lineage>
        <taxon>Bacteria</taxon>
        <taxon>Pseudomonadati</taxon>
        <taxon>Pseudomonadota</taxon>
        <taxon>Alphaproteobacteria</taxon>
        <taxon>Hyphomicrobiales</taxon>
        <taxon>Phyllobacteriaceae</taxon>
        <taxon>Mesorhizobium</taxon>
    </lineage>
</organism>
<evidence type="ECO:0000250" key="1"/>
<evidence type="ECO:0000305" key="2"/>
<dbReference type="EC" id="3.5.2.17"/>
<dbReference type="EMBL" id="BA000012">
    <property type="protein sequence ID" value="BAB51634.1"/>
    <property type="molecule type" value="Genomic_DNA"/>
</dbReference>
<dbReference type="SMR" id="Q98CI7"/>
<dbReference type="KEGG" id="mlo:mlr5133"/>
<dbReference type="eggNOG" id="COG2351">
    <property type="taxonomic scope" value="Bacteria"/>
</dbReference>
<dbReference type="HOGENOM" id="CLU_115536_1_1_5"/>
<dbReference type="Proteomes" id="UP000000552">
    <property type="component" value="Chromosome"/>
</dbReference>
<dbReference type="GO" id="GO:0033971">
    <property type="term" value="F:hydroxyisourate hydrolase activity"/>
    <property type="evidence" value="ECO:0007669"/>
    <property type="project" value="UniProtKB-EC"/>
</dbReference>
<dbReference type="GO" id="GO:0006144">
    <property type="term" value="P:purine nucleobase metabolic process"/>
    <property type="evidence" value="ECO:0007669"/>
    <property type="project" value="UniProtKB-KW"/>
</dbReference>
<dbReference type="CDD" id="cd05822">
    <property type="entry name" value="TLP_HIUase"/>
    <property type="match status" value="1"/>
</dbReference>
<dbReference type="FunFam" id="2.60.40.180:FF:000005">
    <property type="entry name" value="5-hydroxyisourate hydrolase"/>
    <property type="match status" value="1"/>
</dbReference>
<dbReference type="Gene3D" id="2.60.40.180">
    <property type="entry name" value="Transthyretin/hydroxyisourate hydrolase domain"/>
    <property type="match status" value="1"/>
</dbReference>
<dbReference type="InterPro" id="IPR014306">
    <property type="entry name" value="Hydroxyisourate_hydrolase"/>
</dbReference>
<dbReference type="InterPro" id="IPR023418">
    <property type="entry name" value="Thyroxine_BS"/>
</dbReference>
<dbReference type="InterPro" id="IPR000895">
    <property type="entry name" value="Transthyretin/HIU_hydrolase"/>
</dbReference>
<dbReference type="InterPro" id="IPR023416">
    <property type="entry name" value="Transthyretin/HIU_hydrolase_d"/>
</dbReference>
<dbReference type="InterPro" id="IPR036817">
    <property type="entry name" value="Transthyretin/HIU_hydrolase_sf"/>
</dbReference>
<dbReference type="InterPro" id="IPR023419">
    <property type="entry name" value="Transthyretin_CS"/>
</dbReference>
<dbReference type="NCBIfam" id="TIGR02962">
    <property type="entry name" value="hdxy_isourate"/>
    <property type="match status" value="1"/>
</dbReference>
<dbReference type="PANTHER" id="PTHR10395:SF7">
    <property type="entry name" value="5-HYDROXYISOURATE HYDROLASE"/>
    <property type="match status" value="1"/>
</dbReference>
<dbReference type="PANTHER" id="PTHR10395">
    <property type="entry name" value="URICASE AND TRANSTHYRETIN-RELATED"/>
    <property type="match status" value="1"/>
</dbReference>
<dbReference type="Pfam" id="PF00576">
    <property type="entry name" value="Transthyretin"/>
    <property type="match status" value="1"/>
</dbReference>
<dbReference type="PRINTS" id="PR00189">
    <property type="entry name" value="TRNSTHYRETIN"/>
</dbReference>
<dbReference type="SUPFAM" id="SSF49472">
    <property type="entry name" value="Transthyretin (synonym: prealbumin)"/>
    <property type="match status" value="1"/>
</dbReference>
<dbReference type="PROSITE" id="PS00768">
    <property type="entry name" value="TRANSTHYRETIN_1"/>
    <property type="match status" value="1"/>
</dbReference>
<dbReference type="PROSITE" id="PS00769">
    <property type="entry name" value="TRANSTHYRETIN_2"/>
    <property type="match status" value="1"/>
</dbReference>
<name>HIUH_RHILO</name>
<proteinExistence type="inferred from homology"/>
<gene>
    <name type="ordered locus">mlr5133</name>
</gene>
<comment type="function">
    <text evidence="1">Catalyzes the hydrolysis of 5-hydroxyisourate (HIU) to 2-oxo-4-hydroxy-4-carboxy-5-ureidoimidazoline (OHCU).</text>
</comment>
<comment type="catalytic activity">
    <reaction>
        <text>5-hydroxyisourate + H2O = 5-hydroxy-2-oxo-4-ureido-2,5-dihydro-1H-imidazole-5-carboxylate + H(+)</text>
        <dbReference type="Rhea" id="RHEA:23736"/>
        <dbReference type="ChEBI" id="CHEBI:15377"/>
        <dbReference type="ChEBI" id="CHEBI:15378"/>
        <dbReference type="ChEBI" id="CHEBI:18072"/>
        <dbReference type="ChEBI" id="CHEBI:58639"/>
        <dbReference type="EC" id="3.5.2.17"/>
    </reaction>
</comment>
<comment type="subunit">
    <text evidence="1">Homotetramer.</text>
</comment>
<comment type="miscellaneous">
    <text>HIU hydrolysis also occurs spontaneously, but more slowly.</text>
</comment>
<comment type="similarity">
    <text evidence="2">Belongs to the transthyretin family. 5-hydroxyisourate hydrolase subfamily.</text>
</comment>
<protein>
    <recommendedName>
        <fullName>5-hydroxyisourate hydrolase</fullName>
        <shortName>HIU hydrolase</shortName>
        <shortName>HIUHase</shortName>
        <ecNumber>3.5.2.17</ecNumber>
    </recommendedName>
</protein>
<accession>Q98CI7</accession>